<dbReference type="EMBL" id="CR848513">
    <property type="protein sequence ID" value="CAJ82318.1"/>
    <property type="molecule type" value="mRNA"/>
</dbReference>
<dbReference type="RefSeq" id="NP_001016904.1">
    <property type="nucleotide sequence ID" value="NM_001016904.2"/>
</dbReference>
<dbReference type="RefSeq" id="XP_012818450.1">
    <property type="nucleotide sequence ID" value="XM_012962996.2"/>
</dbReference>
<dbReference type="RefSeq" id="XP_012818454.1">
    <property type="nucleotide sequence ID" value="XM_012963000.3"/>
</dbReference>
<dbReference type="RefSeq" id="XP_031756058.1">
    <property type="nucleotide sequence ID" value="XM_031900198.1"/>
</dbReference>
<dbReference type="SMR" id="Q28E01"/>
<dbReference type="FunCoup" id="Q28E01">
    <property type="interactions" value="615"/>
</dbReference>
<dbReference type="STRING" id="8364.ENSXETP00000013292"/>
<dbReference type="GlyCosmos" id="Q28E01">
    <property type="glycosylation" value="1 site, No reported glycans"/>
</dbReference>
<dbReference type="PaxDb" id="8364-ENSXETP00000021053"/>
<dbReference type="GeneID" id="549658"/>
<dbReference type="KEGG" id="xtr:549658"/>
<dbReference type="AGR" id="Xenbase:XB-GENE-1015057"/>
<dbReference type="CTD" id="6575"/>
<dbReference type="Xenbase" id="XB-GENE-1015057">
    <property type="gene designation" value="slc20a2"/>
</dbReference>
<dbReference type="eggNOG" id="KOG2493">
    <property type="taxonomic scope" value="Eukaryota"/>
</dbReference>
<dbReference type="HOGENOM" id="CLU_015355_3_1_1"/>
<dbReference type="InParanoid" id="Q28E01"/>
<dbReference type="OMA" id="MQAFCIA"/>
<dbReference type="OrthoDB" id="260807at2759"/>
<dbReference type="PhylomeDB" id="Q28E01"/>
<dbReference type="TreeFam" id="TF314426"/>
<dbReference type="Reactome" id="R-XTR-427652">
    <property type="pathway name" value="Sodium-coupled phosphate cotransporters"/>
</dbReference>
<dbReference type="Proteomes" id="UP000008143">
    <property type="component" value="Chromosome 1"/>
</dbReference>
<dbReference type="Bgee" id="ENSXETG00000009532">
    <property type="expression patterns" value="Expressed in skeletal muscle tissue and 13 other cell types or tissues"/>
</dbReference>
<dbReference type="GO" id="GO:0016324">
    <property type="term" value="C:apical plasma membrane"/>
    <property type="evidence" value="ECO:0000250"/>
    <property type="project" value="UniProtKB"/>
</dbReference>
<dbReference type="GO" id="GO:0031526">
    <property type="term" value="C:brush border membrane"/>
    <property type="evidence" value="ECO:0000250"/>
    <property type="project" value="UniProtKB"/>
</dbReference>
<dbReference type="GO" id="GO:0005886">
    <property type="term" value="C:plasma membrane"/>
    <property type="evidence" value="ECO:0000250"/>
    <property type="project" value="UniProtKB"/>
</dbReference>
<dbReference type="GO" id="GO:0005436">
    <property type="term" value="F:sodium:phosphate symporter activity"/>
    <property type="evidence" value="ECO:0000250"/>
    <property type="project" value="UniProtKB"/>
</dbReference>
<dbReference type="GO" id="GO:0006817">
    <property type="term" value="P:phosphate ion transport"/>
    <property type="evidence" value="ECO:0007669"/>
    <property type="project" value="UniProtKB-KW"/>
</dbReference>
<dbReference type="InterPro" id="IPR001204">
    <property type="entry name" value="Phos_transporter"/>
</dbReference>
<dbReference type="PANTHER" id="PTHR11101">
    <property type="entry name" value="PHOSPHATE TRANSPORTER"/>
    <property type="match status" value="1"/>
</dbReference>
<dbReference type="PANTHER" id="PTHR11101:SF83">
    <property type="entry name" value="SODIUM-DEPENDENT PHOSPHATE TRANSPORTER 2"/>
    <property type="match status" value="1"/>
</dbReference>
<dbReference type="Pfam" id="PF01384">
    <property type="entry name" value="PHO4"/>
    <property type="match status" value="1"/>
</dbReference>
<protein>
    <recommendedName>
        <fullName>Sodium-dependent phosphate transporter 2</fullName>
    </recommendedName>
    <alternativeName>
        <fullName>Solute carrier family 20 member 2</fullName>
    </alternativeName>
</protein>
<accession>Q28E01</accession>
<reference key="1">
    <citation type="submission" date="2006-10" db="EMBL/GenBank/DDBJ databases">
        <authorList>
            <consortium name="Sanger Xenopus tropicalis EST/cDNA project"/>
        </authorList>
    </citation>
    <scope>NUCLEOTIDE SEQUENCE [LARGE SCALE MRNA]</scope>
    <source>
        <tissue>Egg</tissue>
    </source>
</reference>
<sequence length="653" mass="70621">MVLVEYLWMVIVGFIIAFILAFSVGANDVANSFGTAVGSGVVTLRQACILASIFETTGSVLLGAKVGETIRKGIIDVNLYNNTVDLLMAGEVSAMVGSAVWQLIASFLRLPISGTHCIVGATIGFSLVAIGTHGVQWMQLVKIVASWFISPLLSGLMSGALFLMIKFFILKKEDPVPNGLKALPVFYAATIGINVFSILYTGAPLLGLESFPVWATALLSIGIAIIFALIVWFFVCPWMKKKIASRLKKEGALSRISEESLDKIQDEETSVFKELPGAKGNDESALPLTSSSTDAAVASDSVSNGNTRVPYGRAASMTNGSIRSPISNGTFNFDGHTVKSDVHVYHTVHKDSGLYKDLLHNIHLDRVKTDRPAPENNYRVLRRNNSYTCYTAAICGVPVHSTFKSSDVAMPEDSEKLVGDTVSYSKKRVRYDSYSSYCNAVAEAEIEAEEGGVEMKLATDLADPNPPQDDSLEEDKEEKDKSEVHLLFHFLQILTACFGSFAHGGNDVSNAIGPLVALWLIYEQGGVMQEASTPVWLLLYGGVGICAGLWVWGRRVIQTMGKDLTPITPSSGFTIELASAFTVVVASNIGLPISTTHCKVGSVVAVGWIRSRKAVDWRLFRNIFLAWFVTVPVAGLFSAGVMAILQYGILPYV</sequence>
<evidence type="ECO:0000250" key="1">
    <source>
        <dbReference type="UniProtKB" id="Q08357"/>
    </source>
</evidence>
<evidence type="ECO:0000250" key="2">
    <source>
        <dbReference type="UniProtKB" id="Q63488"/>
    </source>
</evidence>
<evidence type="ECO:0000255" key="3"/>
<evidence type="ECO:0000305" key="4"/>
<name>S20A2_XENTR</name>
<organism>
    <name type="scientific">Xenopus tropicalis</name>
    <name type="common">Western clawed frog</name>
    <name type="synonym">Silurana tropicalis</name>
    <dbReference type="NCBI Taxonomy" id="8364"/>
    <lineage>
        <taxon>Eukaryota</taxon>
        <taxon>Metazoa</taxon>
        <taxon>Chordata</taxon>
        <taxon>Craniata</taxon>
        <taxon>Vertebrata</taxon>
        <taxon>Euteleostomi</taxon>
        <taxon>Amphibia</taxon>
        <taxon>Batrachia</taxon>
        <taxon>Anura</taxon>
        <taxon>Pipoidea</taxon>
        <taxon>Pipidae</taxon>
        <taxon>Xenopodinae</taxon>
        <taxon>Xenopus</taxon>
        <taxon>Silurana</taxon>
    </lineage>
</organism>
<gene>
    <name type="primary">slc20a2</name>
    <name type="ORF">TEgg117l18.1</name>
</gene>
<comment type="function">
    <text evidence="1">Sodium-phosphate symporter which preferentially transports the monovalent form of phosphate with a stoichiometry of two sodium ions per phosphate ion.</text>
</comment>
<comment type="catalytic activity">
    <reaction evidence="1">
        <text>2 Na(+)(out) + phosphate(out) = 2 Na(+)(in) + phosphate(in)</text>
        <dbReference type="Rhea" id="RHEA:71259"/>
        <dbReference type="ChEBI" id="CHEBI:29101"/>
        <dbReference type="ChEBI" id="CHEBI:43474"/>
    </reaction>
</comment>
<comment type="subunit">
    <text evidence="1">Homodimer.</text>
</comment>
<comment type="subcellular location">
    <subcellularLocation>
        <location evidence="2">Cell membrane</location>
        <topology evidence="3">Multi-pass membrane protein</topology>
    </subcellularLocation>
    <subcellularLocation>
        <location evidence="2">Apical cell membrane</location>
        <topology evidence="3">Multi-pass membrane protein</topology>
    </subcellularLocation>
</comment>
<comment type="similarity">
    <text evidence="4">Belongs to the inorganic phosphate transporter (PiT) (TC 2.A.20) family.</text>
</comment>
<keyword id="KW-1003">Cell membrane</keyword>
<keyword id="KW-0325">Glycoprotein</keyword>
<keyword id="KW-0406">Ion transport</keyword>
<keyword id="KW-0472">Membrane</keyword>
<keyword id="KW-0592">Phosphate transport</keyword>
<keyword id="KW-0675">Receptor</keyword>
<keyword id="KW-1185">Reference proteome</keyword>
<keyword id="KW-0915">Sodium</keyword>
<keyword id="KW-0739">Sodium transport</keyword>
<keyword id="KW-0769">Symport</keyword>
<keyword id="KW-0812">Transmembrane</keyword>
<keyword id="KW-1133">Transmembrane helix</keyword>
<keyword id="KW-0813">Transport</keyword>
<proteinExistence type="evidence at transcript level"/>
<feature type="chain" id="PRO_0000341272" description="Sodium-dependent phosphate transporter 2">
    <location>
        <begin position="1"/>
        <end position="653"/>
    </location>
</feature>
<feature type="topological domain" description="Extracellular" evidence="3">
    <location>
        <position position="1"/>
    </location>
</feature>
<feature type="transmembrane region" description="Helical" evidence="3">
    <location>
        <begin position="2"/>
        <end position="22"/>
    </location>
</feature>
<feature type="topological domain" description="Cytoplasmic" evidence="3">
    <location>
        <begin position="23"/>
        <end position="46"/>
    </location>
</feature>
<feature type="transmembrane region" description="Helical" evidence="3">
    <location>
        <begin position="47"/>
        <end position="67"/>
    </location>
</feature>
<feature type="topological domain" description="Extracellular" evidence="3">
    <location>
        <begin position="68"/>
        <end position="86"/>
    </location>
</feature>
<feature type="transmembrane region" description="Helical" evidence="3">
    <location>
        <begin position="87"/>
        <end position="107"/>
    </location>
</feature>
<feature type="topological domain" description="Cytoplasmic" evidence="3">
    <location>
        <begin position="108"/>
        <end position="109"/>
    </location>
</feature>
<feature type="transmembrane region" description="Helical" evidence="3">
    <location>
        <begin position="110"/>
        <end position="130"/>
    </location>
</feature>
<feature type="topological domain" description="Extracellular" evidence="3">
    <location>
        <begin position="131"/>
        <end position="142"/>
    </location>
</feature>
<feature type="transmembrane region" description="Helical" evidence="3">
    <location>
        <begin position="143"/>
        <end position="163"/>
    </location>
</feature>
<feature type="topological domain" description="Cytoplasmic" evidence="3">
    <location>
        <begin position="164"/>
        <end position="187"/>
    </location>
</feature>
<feature type="transmembrane region" description="Helical" evidence="3">
    <location>
        <begin position="188"/>
        <end position="208"/>
    </location>
</feature>
<feature type="topological domain" description="Extracellular" evidence="3">
    <location>
        <begin position="209"/>
        <end position="217"/>
    </location>
</feature>
<feature type="transmembrane region" description="Helical" evidence="3">
    <location>
        <begin position="218"/>
        <end position="238"/>
    </location>
</feature>
<feature type="topological domain" description="Cytoplasmic" evidence="3">
    <location>
        <begin position="239"/>
        <end position="483"/>
    </location>
</feature>
<feature type="transmembrane region" description="Helical" evidence="3">
    <location>
        <begin position="484"/>
        <end position="504"/>
    </location>
</feature>
<feature type="topological domain" description="Extracellular" evidence="3">
    <location>
        <begin position="505"/>
        <end position="532"/>
    </location>
</feature>
<feature type="transmembrane region" description="Helical" evidence="3">
    <location>
        <begin position="533"/>
        <end position="553"/>
    </location>
</feature>
<feature type="topological domain" description="Cytoplasmic" evidence="3">
    <location>
        <begin position="554"/>
        <end position="572"/>
    </location>
</feature>
<feature type="transmembrane region" description="Helical" evidence="3">
    <location>
        <begin position="573"/>
        <end position="587"/>
    </location>
</feature>
<feature type="topological domain" description="Extracellular" evidence="3">
    <location>
        <begin position="588"/>
        <end position="594"/>
    </location>
</feature>
<feature type="transmembrane region" description="Helical" evidence="3">
    <location>
        <begin position="595"/>
        <end position="610"/>
    </location>
</feature>
<feature type="topological domain" description="Cytoplasmic" evidence="3">
    <location>
        <begin position="611"/>
        <end position="622"/>
    </location>
</feature>
<feature type="transmembrane region" description="Helical" evidence="3">
    <location>
        <begin position="623"/>
        <end position="643"/>
    </location>
</feature>
<feature type="topological domain" description="Extracellular" evidence="3">
    <location>
        <begin position="644"/>
        <end position="653"/>
    </location>
</feature>
<feature type="glycosylation site" description="N-linked (GlcNAc...) asparagine" evidence="3">
    <location>
        <position position="81"/>
    </location>
</feature>